<gene>
    <name evidence="1" type="primary">rplN</name>
    <name type="ordered locus">Exig_0106</name>
</gene>
<accession>B1YGW0</accession>
<sequence>MIQQESRLKVADNSGAREVLTIKVLGGSGRKTANIGDVIVCTVKQATPGGVVKKGEVVRAVVVRTKRGVRRKDGSYIRFDENAAVIIKDDKSPRGTRIFGPVARELREKDFMKIVSLAPEVL</sequence>
<reference key="1">
    <citation type="submission" date="2008-04" db="EMBL/GenBank/DDBJ databases">
        <title>Complete sequence of chromosome of Exiguobacterium sibiricum 255-15.</title>
        <authorList>
            <consortium name="US DOE Joint Genome Institute"/>
            <person name="Copeland A."/>
            <person name="Lucas S."/>
            <person name="Lapidus A."/>
            <person name="Glavina del Rio T."/>
            <person name="Dalin E."/>
            <person name="Tice H."/>
            <person name="Bruce D."/>
            <person name="Goodwin L."/>
            <person name="Pitluck S."/>
            <person name="Kiss H."/>
            <person name="Chertkov O."/>
            <person name="Monk C."/>
            <person name="Brettin T."/>
            <person name="Detter J.C."/>
            <person name="Han C."/>
            <person name="Kuske C.R."/>
            <person name="Schmutz J."/>
            <person name="Larimer F."/>
            <person name="Land M."/>
            <person name="Hauser L."/>
            <person name="Kyrpides N."/>
            <person name="Mikhailova N."/>
            <person name="Vishnivetskaya T."/>
            <person name="Rodrigues D.F."/>
            <person name="Gilichinsky D."/>
            <person name="Tiedje J."/>
            <person name="Richardson P."/>
        </authorList>
    </citation>
    <scope>NUCLEOTIDE SEQUENCE [LARGE SCALE GENOMIC DNA]</scope>
    <source>
        <strain>DSM 17290 / CCUG 55495 / CIP 109462 / JCM 13490 / 255-15</strain>
    </source>
</reference>
<feature type="chain" id="PRO_1000144273" description="Large ribosomal subunit protein uL14">
    <location>
        <begin position="1"/>
        <end position="122"/>
    </location>
</feature>
<organism>
    <name type="scientific">Exiguobacterium sibiricum (strain DSM 17290 / CCUG 55495 / CIP 109462 / JCM 13490 / 255-15)</name>
    <dbReference type="NCBI Taxonomy" id="262543"/>
    <lineage>
        <taxon>Bacteria</taxon>
        <taxon>Bacillati</taxon>
        <taxon>Bacillota</taxon>
        <taxon>Bacilli</taxon>
        <taxon>Bacillales</taxon>
        <taxon>Bacillales Family XII. Incertae Sedis</taxon>
        <taxon>Exiguobacterium</taxon>
    </lineage>
</organism>
<evidence type="ECO:0000255" key="1">
    <source>
        <dbReference type="HAMAP-Rule" id="MF_01367"/>
    </source>
</evidence>
<evidence type="ECO:0000305" key="2"/>
<proteinExistence type="inferred from homology"/>
<protein>
    <recommendedName>
        <fullName evidence="1">Large ribosomal subunit protein uL14</fullName>
    </recommendedName>
    <alternativeName>
        <fullName evidence="2">50S ribosomal protein L14</fullName>
    </alternativeName>
</protein>
<dbReference type="EMBL" id="CP001022">
    <property type="protein sequence ID" value="ACB59593.1"/>
    <property type="molecule type" value="Genomic_DNA"/>
</dbReference>
<dbReference type="RefSeq" id="WP_012369019.1">
    <property type="nucleotide sequence ID" value="NC_010556.1"/>
</dbReference>
<dbReference type="SMR" id="B1YGW0"/>
<dbReference type="STRING" id="262543.Exig_0106"/>
<dbReference type="GeneID" id="90838848"/>
<dbReference type="KEGG" id="esi:Exig_0106"/>
<dbReference type="eggNOG" id="COG0093">
    <property type="taxonomic scope" value="Bacteria"/>
</dbReference>
<dbReference type="HOGENOM" id="CLU_095071_2_1_9"/>
<dbReference type="OrthoDB" id="9806379at2"/>
<dbReference type="Proteomes" id="UP000001681">
    <property type="component" value="Chromosome"/>
</dbReference>
<dbReference type="GO" id="GO:0022625">
    <property type="term" value="C:cytosolic large ribosomal subunit"/>
    <property type="evidence" value="ECO:0007669"/>
    <property type="project" value="TreeGrafter"/>
</dbReference>
<dbReference type="GO" id="GO:0070180">
    <property type="term" value="F:large ribosomal subunit rRNA binding"/>
    <property type="evidence" value="ECO:0007669"/>
    <property type="project" value="TreeGrafter"/>
</dbReference>
<dbReference type="GO" id="GO:0003735">
    <property type="term" value="F:structural constituent of ribosome"/>
    <property type="evidence" value="ECO:0007669"/>
    <property type="project" value="InterPro"/>
</dbReference>
<dbReference type="GO" id="GO:0006412">
    <property type="term" value="P:translation"/>
    <property type="evidence" value="ECO:0007669"/>
    <property type="project" value="UniProtKB-UniRule"/>
</dbReference>
<dbReference type="CDD" id="cd00337">
    <property type="entry name" value="Ribosomal_uL14"/>
    <property type="match status" value="1"/>
</dbReference>
<dbReference type="FunFam" id="2.40.150.20:FF:000001">
    <property type="entry name" value="50S ribosomal protein L14"/>
    <property type="match status" value="1"/>
</dbReference>
<dbReference type="Gene3D" id="2.40.150.20">
    <property type="entry name" value="Ribosomal protein L14"/>
    <property type="match status" value="1"/>
</dbReference>
<dbReference type="HAMAP" id="MF_01367">
    <property type="entry name" value="Ribosomal_uL14"/>
    <property type="match status" value="1"/>
</dbReference>
<dbReference type="InterPro" id="IPR000218">
    <property type="entry name" value="Ribosomal_uL14"/>
</dbReference>
<dbReference type="InterPro" id="IPR005745">
    <property type="entry name" value="Ribosomal_uL14_bac-type"/>
</dbReference>
<dbReference type="InterPro" id="IPR019972">
    <property type="entry name" value="Ribosomal_uL14_CS"/>
</dbReference>
<dbReference type="InterPro" id="IPR036853">
    <property type="entry name" value="Ribosomal_uL14_sf"/>
</dbReference>
<dbReference type="NCBIfam" id="TIGR01067">
    <property type="entry name" value="rplN_bact"/>
    <property type="match status" value="1"/>
</dbReference>
<dbReference type="PANTHER" id="PTHR11761">
    <property type="entry name" value="50S/60S RIBOSOMAL PROTEIN L14/L23"/>
    <property type="match status" value="1"/>
</dbReference>
<dbReference type="PANTHER" id="PTHR11761:SF3">
    <property type="entry name" value="LARGE RIBOSOMAL SUBUNIT PROTEIN UL14M"/>
    <property type="match status" value="1"/>
</dbReference>
<dbReference type="Pfam" id="PF00238">
    <property type="entry name" value="Ribosomal_L14"/>
    <property type="match status" value="1"/>
</dbReference>
<dbReference type="SMART" id="SM01374">
    <property type="entry name" value="Ribosomal_L14"/>
    <property type="match status" value="1"/>
</dbReference>
<dbReference type="SUPFAM" id="SSF50193">
    <property type="entry name" value="Ribosomal protein L14"/>
    <property type="match status" value="1"/>
</dbReference>
<dbReference type="PROSITE" id="PS00049">
    <property type="entry name" value="RIBOSOMAL_L14"/>
    <property type="match status" value="1"/>
</dbReference>
<name>RL14_EXIS2</name>
<keyword id="KW-1185">Reference proteome</keyword>
<keyword id="KW-0687">Ribonucleoprotein</keyword>
<keyword id="KW-0689">Ribosomal protein</keyword>
<keyword id="KW-0694">RNA-binding</keyword>
<keyword id="KW-0699">rRNA-binding</keyword>
<comment type="function">
    <text evidence="1">Binds to 23S rRNA. Forms part of two intersubunit bridges in the 70S ribosome.</text>
</comment>
<comment type="subunit">
    <text evidence="1">Part of the 50S ribosomal subunit. Forms a cluster with proteins L3 and L19. In the 70S ribosome, L14 and L19 interact and together make contacts with the 16S rRNA in bridges B5 and B8.</text>
</comment>
<comment type="similarity">
    <text evidence="1">Belongs to the universal ribosomal protein uL14 family.</text>
</comment>